<proteinExistence type="inferred from homology"/>
<sequence length="117" mass="13505">MQTSNILAKIEAPLFREGIPDFRVGDTVRVHYRIVEGEKERIQVFQGVVLKRHRAGVRSTFTVRKVSFTVGVERMFLLHSPRIDKVEIVSRGVVRRSRLFYLRNLAGKAARVRDAKD</sequence>
<keyword id="KW-1185">Reference proteome</keyword>
<keyword id="KW-0687">Ribonucleoprotein</keyword>
<keyword id="KW-0689">Ribosomal protein</keyword>
<reference key="1">
    <citation type="journal article" date="2007" name="Nat. Biotechnol.">
        <title>Complete genome sequence of the myxobacterium Sorangium cellulosum.</title>
        <authorList>
            <person name="Schneiker S."/>
            <person name="Perlova O."/>
            <person name="Kaiser O."/>
            <person name="Gerth K."/>
            <person name="Alici A."/>
            <person name="Altmeyer M.O."/>
            <person name="Bartels D."/>
            <person name="Bekel T."/>
            <person name="Beyer S."/>
            <person name="Bode E."/>
            <person name="Bode H.B."/>
            <person name="Bolten C.J."/>
            <person name="Choudhuri J.V."/>
            <person name="Doss S."/>
            <person name="Elnakady Y.A."/>
            <person name="Frank B."/>
            <person name="Gaigalat L."/>
            <person name="Goesmann A."/>
            <person name="Groeger C."/>
            <person name="Gross F."/>
            <person name="Jelsbak L."/>
            <person name="Jelsbak L."/>
            <person name="Kalinowski J."/>
            <person name="Kegler C."/>
            <person name="Knauber T."/>
            <person name="Konietzny S."/>
            <person name="Kopp M."/>
            <person name="Krause L."/>
            <person name="Krug D."/>
            <person name="Linke B."/>
            <person name="Mahmud T."/>
            <person name="Martinez-Arias R."/>
            <person name="McHardy A.C."/>
            <person name="Merai M."/>
            <person name="Meyer F."/>
            <person name="Mormann S."/>
            <person name="Munoz-Dorado J."/>
            <person name="Perez J."/>
            <person name="Pradella S."/>
            <person name="Rachid S."/>
            <person name="Raddatz G."/>
            <person name="Rosenau F."/>
            <person name="Rueckert C."/>
            <person name="Sasse F."/>
            <person name="Scharfe M."/>
            <person name="Schuster S.C."/>
            <person name="Suen G."/>
            <person name="Treuner-Lange A."/>
            <person name="Velicer G.J."/>
            <person name="Vorholter F.-J."/>
            <person name="Weissman K.J."/>
            <person name="Welch R.D."/>
            <person name="Wenzel S.C."/>
            <person name="Whitworth D.E."/>
            <person name="Wilhelm S."/>
            <person name="Wittmann C."/>
            <person name="Bloecker H."/>
            <person name="Puehler A."/>
            <person name="Mueller R."/>
        </authorList>
    </citation>
    <scope>NUCLEOTIDE SEQUENCE [LARGE SCALE GENOMIC DNA]</scope>
    <source>
        <strain>So ce56</strain>
    </source>
</reference>
<evidence type="ECO:0000255" key="1">
    <source>
        <dbReference type="HAMAP-Rule" id="MF_00402"/>
    </source>
</evidence>
<evidence type="ECO:0000305" key="2"/>
<protein>
    <recommendedName>
        <fullName evidence="1">Large ribosomal subunit protein bL19</fullName>
    </recommendedName>
    <alternativeName>
        <fullName evidence="2">50S ribosomal protein L19</fullName>
    </alternativeName>
</protein>
<dbReference type="EMBL" id="AM746676">
    <property type="protein sequence ID" value="CAN92676.1"/>
    <property type="molecule type" value="Genomic_DNA"/>
</dbReference>
<dbReference type="RefSeq" id="WP_012235149.1">
    <property type="nucleotide sequence ID" value="NC_010162.1"/>
</dbReference>
<dbReference type="SMR" id="A9G6C7"/>
<dbReference type="STRING" id="448385.sce2517"/>
<dbReference type="KEGG" id="scl:sce2517"/>
<dbReference type="eggNOG" id="COG0335">
    <property type="taxonomic scope" value="Bacteria"/>
</dbReference>
<dbReference type="HOGENOM" id="CLU_103507_2_2_7"/>
<dbReference type="OrthoDB" id="9803541at2"/>
<dbReference type="BioCyc" id="SCEL448385:SCE_RS12890-MONOMER"/>
<dbReference type="Proteomes" id="UP000002139">
    <property type="component" value="Chromosome"/>
</dbReference>
<dbReference type="GO" id="GO:0022625">
    <property type="term" value="C:cytosolic large ribosomal subunit"/>
    <property type="evidence" value="ECO:0007669"/>
    <property type="project" value="TreeGrafter"/>
</dbReference>
<dbReference type="GO" id="GO:0003735">
    <property type="term" value="F:structural constituent of ribosome"/>
    <property type="evidence" value="ECO:0007669"/>
    <property type="project" value="InterPro"/>
</dbReference>
<dbReference type="GO" id="GO:0006412">
    <property type="term" value="P:translation"/>
    <property type="evidence" value="ECO:0007669"/>
    <property type="project" value="UniProtKB-UniRule"/>
</dbReference>
<dbReference type="FunFam" id="2.30.30.790:FF:000001">
    <property type="entry name" value="50S ribosomal protein L19"/>
    <property type="match status" value="1"/>
</dbReference>
<dbReference type="Gene3D" id="2.30.30.790">
    <property type="match status" value="1"/>
</dbReference>
<dbReference type="HAMAP" id="MF_00402">
    <property type="entry name" value="Ribosomal_bL19"/>
    <property type="match status" value="1"/>
</dbReference>
<dbReference type="InterPro" id="IPR001857">
    <property type="entry name" value="Ribosomal_bL19"/>
</dbReference>
<dbReference type="InterPro" id="IPR018257">
    <property type="entry name" value="Ribosomal_bL19_CS"/>
</dbReference>
<dbReference type="InterPro" id="IPR038657">
    <property type="entry name" value="Ribosomal_bL19_sf"/>
</dbReference>
<dbReference type="InterPro" id="IPR008991">
    <property type="entry name" value="Translation_prot_SH3-like_sf"/>
</dbReference>
<dbReference type="NCBIfam" id="TIGR01024">
    <property type="entry name" value="rplS_bact"/>
    <property type="match status" value="1"/>
</dbReference>
<dbReference type="PANTHER" id="PTHR15680:SF9">
    <property type="entry name" value="LARGE RIBOSOMAL SUBUNIT PROTEIN BL19M"/>
    <property type="match status" value="1"/>
</dbReference>
<dbReference type="PANTHER" id="PTHR15680">
    <property type="entry name" value="RIBOSOMAL PROTEIN L19"/>
    <property type="match status" value="1"/>
</dbReference>
<dbReference type="Pfam" id="PF01245">
    <property type="entry name" value="Ribosomal_L19"/>
    <property type="match status" value="1"/>
</dbReference>
<dbReference type="PIRSF" id="PIRSF002191">
    <property type="entry name" value="Ribosomal_L19"/>
    <property type="match status" value="1"/>
</dbReference>
<dbReference type="PRINTS" id="PR00061">
    <property type="entry name" value="RIBOSOMALL19"/>
</dbReference>
<dbReference type="SUPFAM" id="SSF50104">
    <property type="entry name" value="Translation proteins SH3-like domain"/>
    <property type="match status" value="1"/>
</dbReference>
<dbReference type="PROSITE" id="PS01015">
    <property type="entry name" value="RIBOSOMAL_L19"/>
    <property type="match status" value="1"/>
</dbReference>
<gene>
    <name evidence="1" type="primary">rplS</name>
    <name type="ordered locus">sce2517</name>
</gene>
<name>RL19_SORC5</name>
<accession>A9G6C7</accession>
<comment type="function">
    <text evidence="1">This protein is located at the 30S-50S ribosomal subunit interface and may play a role in the structure and function of the aminoacyl-tRNA binding site.</text>
</comment>
<comment type="similarity">
    <text evidence="1">Belongs to the bacterial ribosomal protein bL19 family.</text>
</comment>
<organism>
    <name type="scientific">Sorangium cellulosum (strain So ce56)</name>
    <name type="common">Polyangium cellulosum (strain So ce56)</name>
    <dbReference type="NCBI Taxonomy" id="448385"/>
    <lineage>
        <taxon>Bacteria</taxon>
        <taxon>Pseudomonadati</taxon>
        <taxon>Myxococcota</taxon>
        <taxon>Polyangia</taxon>
        <taxon>Polyangiales</taxon>
        <taxon>Polyangiaceae</taxon>
        <taxon>Sorangium</taxon>
    </lineage>
</organism>
<feature type="chain" id="PRO_0000340746" description="Large ribosomal subunit protein bL19">
    <location>
        <begin position="1"/>
        <end position="117"/>
    </location>
</feature>